<evidence type="ECO:0000255" key="1">
    <source>
        <dbReference type="HAMAP-Rule" id="MF_01367"/>
    </source>
</evidence>
<evidence type="ECO:0000305" key="2"/>
<proteinExistence type="inferred from homology"/>
<dbReference type="EMBL" id="CP001096">
    <property type="protein sequence ID" value="ACF02157.1"/>
    <property type="molecule type" value="Genomic_DNA"/>
</dbReference>
<dbReference type="RefSeq" id="WP_011158785.1">
    <property type="nucleotide sequence ID" value="NC_011004.1"/>
</dbReference>
<dbReference type="SMR" id="B3QBX0"/>
<dbReference type="GeneID" id="66894326"/>
<dbReference type="KEGG" id="rpt:Rpal_3657"/>
<dbReference type="HOGENOM" id="CLU_095071_2_1_5"/>
<dbReference type="OrthoDB" id="9806379at2"/>
<dbReference type="Proteomes" id="UP000001725">
    <property type="component" value="Chromosome"/>
</dbReference>
<dbReference type="GO" id="GO:0022625">
    <property type="term" value="C:cytosolic large ribosomal subunit"/>
    <property type="evidence" value="ECO:0007669"/>
    <property type="project" value="TreeGrafter"/>
</dbReference>
<dbReference type="GO" id="GO:0070180">
    <property type="term" value="F:large ribosomal subunit rRNA binding"/>
    <property type="evidence" value="ECO:0007669"/>
    <property type="project" value="TreeGrafter"/>
</dbReference>
<dbReference type="GO" id="GO:0003735">
    <property type="term" value="F:structural constituent of ribosome"/>
    <property type="evidence" value="ECO:0007669"/>
    <property type="project" value="InterPro"/>
</dbReference>
<dbReference type="GO" id="GO:0006412">
    <property type="term" value="P:translation"/>
    <property type="evidence" value="ECO:0007669"/>
    <property type="project" value="UniProtKB-UniRule"/>
</dbReference>
<dbReference type="CDD" id="cd00337">
    <property type="entry name" value="Ribosomal_uL14"/>
    <property type="match status" value="1"/>
</dbReference>
<dbReference type="FunFam" id="2.40.150.20:FF:000001">
    <property type="entry name" value="50S ribosomal protein L14"/>
    <property type="match status" value="1"/>
</dbReference>
<dbReference type="Gene3D" id="2.40.150.20">
    <property type="entry name" value="Ribosomal protein L14"/>
    <property type="match status" value="1"/>
</dbReference>
<dbReference type="HAMAP" id="MF_01367">
    <property type="entry name" value="Ribosomal_uL14"/>
    <property type="match status" value="1"/>
</dbReference>
<dbReference type="InterPro" id="IPR000218">
    <property type="entry name" value="Ribosomal_uL14"/>
</dbReference>
<dbReference type="InterPro" id="IPR005745">
    <property type="entry name" value="Ribosomal_uL14_bac-type"/>
</dbReference>
<dbReference type="InterPro" id="IPR019972">
    <property type="entry name" value="Ribosomal_uL14_CS"/>
</dbReference>
<dbReference type="InterPro" id="IPR036853">
    <property type="entry name" value="Ribosomal_uL14_sf"/>
</dbReference>
<dbReference type="NCBIfam" id="TIGR01067">
    <property type="entry name" value="rplN_bact"/>
    <property type="match status" value="1"/>
</dbReference>
<dbReference type="PANTHER" id="PTHR11761">
    <property type="entry name" value="50S/60S RIBOSOMAL PROTEIN L14/L23"/>
    <property type="match status" value="1"/>
</dbReference>
<dbReference type="PANTHER" id="PTHR11761:SF3">
    <property type="entry name" value="LARGE RIBOSOMAL SUBUNIT PROTEIN UL14M"/>
    <property type="match status" value="1"/>
</dbReference>
<dbReference type="Pfam" id="PF00238">
    <property type="entry name" value="Ribosomal_L14"/>
    <property type="match status" value="1"/>
</dbReference>
<dbReference type="SMART" id="SM01374">
    <property type="entry name" value="Ribosomal_L14"/>
    <property type="match status" value="1"/>
</dbReference>
<dbReference type="SUPFAM" id="SSF50193">
    <property type="entry name" value="Ribosomal protein L14"/>
    <property type="match status" value="1"/>
</dbReference>
<dbReference type="PROSITE" id="PS00049">
    <property type="entry name" value="RIBOSOMAL_L14"/>
    <property type="match status" value="1"/>
</dbReference>
<sequence length="122" mass="13489">MIQMQTNLDVADNSGARRVMCIKVIGGSKRRYATVGDVIVVSIKEAIPRGKVKKGDVMKAVVVRVRKDIRRADGSVIRFDRNAAVLINNQSEPIGTRIFGPVPRELRAKNHMKIISLAPEVL</sequence>
<feature type="chain" id="PRO_1000144320" description="Large ribosomal subunit protein uL14">
    <location>
        <begin position="1"/>
        <end position="122"/>
    </location>
</feature>
<gene>
    <name evidence="1" type="primary">rplN</name>
    <name type="ordered locus">Rpal_3657</name>
</gene>
<reference key="1">
    <citation type="submission" date="2008-05" db="EMBL/GenBank/DDBJ databases">
        <title>Complete sequence of Rhodopseudomonas palustris TIE-1.</title>
        <authorList>
            <consortium name="US DOE Joint Genome Institute"/>
            <person name="Lucas S."/>
            <person name="Copeland A."/>
            <person name="Lapidus A."/>
            <person name="Glavina del Rio T."/>
            <person name="Dalin E."/>
            <person name="Tice H."/>
            <person name="Pitluck S."/>
            <person name="Chain P."/>
            <person name="Malfatti S."/>
            <person name="Shin M."/>
            <person name="Vergez L."/>
            <person name="Lang D."/>
            <person name="Schmutz J."/>
            <person name="Larimer F."/>
            <person name="Land M."/>
            <person name="Hauser L."/>
            <person name="Kyrpides N."/>
            <person name="Mikhailova N."/>
            <person name="Emerson D."/>
            <person name="Newman D.K."/>
            <person name="Roden E."/>
            <person name="Richardson P."/>
        </authorList>
    </citation>
    <scope>NUCLEOTIDE SEQUENCE [LARGE SCALE GENOMIC DNA]</scope>
    <source>
        <strain>TIE-1</strain>
    </source>
</reference>
<comment type="function">
    <text evidence="1">Binds to 23S rRNA. Forms part of two intersubunit bridges in the 70S ribosome.</text>
</comment>
<comment type="subunit">
    <text evidence="1">Part of the 50S ribosomal subunit. Forms a cluster with proteins L3 and L19. In the 70S ribosome, L14 and L19 interact and together make contacts with the 16S rRNA in bridges B5 and B8.</text>
</comment>
<comment type="similarity">
    <text evidence="1">Belongs to the universal ribosomal protein uL14 family.</text>
</comment>
<keyword id="KW-0687">Ribonucleoprotein</keyword>
<keyword id="KW-0689">Ribosomal protein</keyword>
<keyword id="KW-0694">RNA-binding</keyword>
<keyword id="KW-0699">rRNA-binding</keyword>
<protein>
    <recommendedName>
        <fullName evidence="1">Large ribosomal subunit protein uL14</fullName>
    </recommendedName>
    <alternativeName>
        <fullName evidence="2">50S ribosomal protein L14</fullName>
    </alternativeName>
</protein>
<organism>
    <name type="scientific">Rhodopseudomonas palustris (strain TIE-1)</name>
    <dbReference type="NCBI Taxonomy" id="395960"/>
    <lineage>
        <taxon>Bacteria</taxon>
        <taxon>Pseudomonadati</taxon>
        <taxon>Pseudomonadota</taxon>
        <taxon>Alphaproteobacteria</taxon>
        <taxon>Hyphomicrobiales</taxon>
        <taxon>Nitrobacteraceae</taxon>
        <taxon>Rhodopseudomonas</taxon>
    </lineage>
</organism>
<name>RL14_RHOPT</name>
<accession>B3QBX0</accession>